<comment type="function">
    <text>CDCH induces ovulation and egg-mass production; it may also stimulate synthesis of secretory products in the female accessory sex glands and affect neurons in the neuronal circuits controlling locomotion and feeding.</text>
</comment>
<comment type="function">
    <text>Calfluxin is involved in the influx of calcium into mitochondria of the albumen gland.</text>
</comment>
<comment type="function">
    <text>CDCA (or alpha-CDCP) triggers the electrical activity of the caudodorsal cells (CDCS).</text>
</comment>
<comment type="subcellular location">
    <subcellularLocation>
        <location>Secreted</location>
    </subcellularLocation>
</comment>
<comment type="similarity">
    <text evidence="4">Belongs to the molluscan ELH family.</text>
</comment>
<accession>P06308</accession>
<accession>P20055</accession>
<name>OVUH_LYMST</name>
<protein>
    <recommendedName>
        <fullName>Ovulation prohormone</fullName>
    </recommendedName>
    <component>
        <recommendedName>
            <fullName>Beta-3-CDCP</fullName>
        </recommendedName>
    </component>
    <component>
        <recommendedName>
            <fullName>Beta-2-CDCP</fullName>
        </recommendedName>
    </component>
    <component>
        <recommendedName>
            <fullName>Beta-1-CDCP</fullName>
        </recommendedName>
    </component>
    <component>
        <recommendedName>
            <fullName>Calfluxin</fullName>
        </recommendedName>
    </component>
    <component>
        <recommendedName>
            <fullName>Alpha-CDCP</fullName>
        </recommendedName>
    </component>
    <component>
        <recommendedName>
            <fullName>Ovulation hormone</fullName>
        </recommendedName>
        <alternativeName>
            <fullName>Cerebral neurosecretory caudodorsal cell hormone</fullName>
            <shortName>CDCH</shortName>
        </alternativeName>
    </component>
    <component>
        <recommendedName>
            <fullName>X-CDCP</fullName>
        </recommendedName>
    </component>
</protein>
<feature type="signal peptide" evidence="1">
    <location>
        <begin position="1"/>
        <end position="34"/>
    </location>
</feature>
<feature type="propeptide" id="PRO_0000001914">
    <location>
        <begin position="35"/>
        <end position="102"/>
    </location>
</feature>
<feature type="peptide" id="PRO_0000001915" description="Beta-3-CDCP">
    <location>
        <begin position="105"/>
        <end position="109"/>
    </location>
</feature>
<feature type="peptide" id="PRO_0000001916" description="Beta-2-CDCP">
    <location>
        <begin position="112"/>
        <end position="116"/>
    </location>
</feature>
<feature type="peptide" id="PRO_0000001917" description="Beta-1-CDCP">
    <location>
        <begin position="119"/>
        <end position="123"/>
    </location>
</feature>
<feature type="peptide" id="PRO_0000001918" description="Calfluxin">
    <location>
        <begin position="126"/>
        <end position="139"/>
    </location>
</feature>
<feature type="peptide" id="PRO_0000001919" description="Alpha-CDCP">
    <location>
        <begin position="144"/>
        <end position="152"/>
    </location>
</feature>
<feature type="peptide" id="PRO_0000001920" description="X-CDCP">
    <location>
        <begin position="156"/>
        <end position="178"/>
    </location>
</feature>
<feature type="propeptide" id="PRO_0000001921">
    <location>
        <begin position="181"/>
        <end position="195"/>
    </location>
</feature>
<feature type="peptide" id="PRO_0000001922" description="Ovulation hormone">
    <location>
        <begin position="198"/>
        <end position="233"/>
    </location>
</feature>
<feature type="propeptide" id="PRO_0000001923">
    <location>
        <begin position="237"/>
        <end position="259"/>
    </location>
</feature>
<feature type="repeat">
    <location>
        <begin position="119"/>
        <end position="123"/>
    </location>
</feature>
<feature type="repeat">
    <location>
        <begin position="146"/>
        <end position="150"/>
    </location>
</feature>
<feature type="region of interest" description="Disordered" evidence="2">
    <location>
        <begin position="42"/>
        <end position="103"/>
    </location>
</feature>
<feature type="region of interest" description="2 X 5 AA repeats of R-L-R-F-H">
    <location>
        <begin position="119"/>
        <end position="150"/>
    </location>
</feature>
<feature type="region of interest" description="Disordered" evidence="2">
    <location>
        <begin position="149"/>
        <end position="197"/>
    </location>
</feature>
<feature type="modified residue" description="Leucine amide" evidence="3">
    <location>
        <position position="233"/>
    </location>
</feature>
<feature type="sequence conflict" description="In Ref. 2; AA sequence." evidence="4" ref="2">
    <original>K</original>
    <variation>W</variation>
    <location>
        <position position="217"/>
    </location>
</feature>
<evidence type="ECO:0000255" key="1"/>
<evidence type="ECO:0000256" key="2">
    <source>
        <dbReference type="SAM" id="MobiDB-lite"/>
    </source>
</evidence>
<evidence type="ECO:0000269" key="3">
    <source>
    </source>
</evidence>
<evidence type="ECO:0000305" key="4"/>
<keyword id="KW-0027">Amidation</keyword>
<keyword id="KW-0165">Cleavage on pair of basic residues</keyword>
<keyword id="KW-0903">Direct protein sequencing</keyword>
<keyword id="KW-0372">Hormone</keyword>
<keyword id="KW-0527">Neuropeptide</keyword>
<keyword id="KW-0677">Repeat</keyword>
<keyword id="KW-0964">Secreted</keyword>
<keyword id="KW-0732">Signal</keyword>
<reference key="1">
    <citation type="journal article" date="1988" name="J. Neurosci.">
        <title>Isolation, characterization, and evolutionary aspects of a cDNA clone encoding multiple neuropeptides involved in the stereotyped egg-laying behavior of the freshwater snail Lymnaea stagnalis.</title>
        <authorList>
            <person name="Vreugdenhil E."/>
            <person name="Jackson J.F."/>
            <person name="Bouwmeester T."/>
            <person name="Smit A.B."/>
            <person name="van Minnen J."/>
            <person name="van Heerikhuizen H."/>
            <person name="Klootwijk J."/>
            <person name="Joosse J."/>
        </authorList>
    </citation>
    <scope>NUCLEOTIDE SEQUENCE</scope>
</reference>
<reference key="2">
    <citation type="journal article" date="1985" name="Proc. Natl. Acad. Sci. U.S.A.">
        <title>Purification and amino acid sequence of the ovulation neurohormone of Lymnaea stagnalis.</title>
        <authorList>
            <person name="Ebberink R.H.M."/>
            <person name="van Loenhout H."/>
            <person name="Geraerts W.P.M."/>
            <person name="Joosse J."/>
        </authorList>
    </citation>
    <scope>PROTEIN SEQUENCE OF 198-233</scope>
    <scope>AMIDATION AT LEU-233</scope>
</reference>
<sequence>MKMSGLLSKPDYGVVGIVFTVVFCCWCSSSTTHALSIAEPGRDRYDKRSPTGHGVEVVESGEDYGSNRPQPVYGDEDEEDSADVYVGSDESSSGEKTRLTAAKRRLRFNKRRLRASKRRLRFHKRRVDSADESNDDGFDRKAREPRLRFHDVRKRSATAEEGSENAEIEESHLGNSRSRRSAGSAPSSANEVQRSKRLSITNDLRAIADSYLYDQHKLRERQEENLRRRFLELGKRGSAFFDHIPIIFGEPQYDYQPFK</sequence>
<dbReference type="PIR" id="A34946">
    <property type="entry name" value="ONGAOL"/>
</dbReference>
<dbReference type="SMR" id="P06308"/>
<dbReference type="GO" id="GO:0005576">
    <property type="term" value="C:extracellular region"/>
    <property type="evidence" value="ECO:0007669"/>
    <property type="project" value="UniProtKB-SubCell"/>
</dbReference>
<dbReference type="GO" id="GO:0005179">
    <property type="term" value="F:hormone activity"/>
    <property type="evidence" value="ECO:0007669"/>
    <property type="project" value="UniProtKB-KW"/>
</dbReference>
<dbReference type="GO" id="GO:0007218">
    <property type="term" value="P:neuropeptide signaling pathway"/>
    <property type="evidence" value="ECO:0007669"/>
    <property type="project" value="UniProtKB-KW"/>
</dbReference>
<dbReference type="InterPro" id="IPR003424">
    <property type="entry name" value="ELH"/>
</dbReference>
<dbReference type="Pfam" id="PF02323">
    <property type="entry name" value="ELH"/>
    <property type="match status" value="1"/>
</dbReference>
<organism>
    <name type="scientific">Lymnaea stagnalis</name>
    <name type="common">Great pond snail</name>
    <name type="synonym">Helix stagnalis</name>
    <dbReference type="NCBI Taxonomy" id="6523"/>
    <lineage>
        <taxon>Eukaryota</taxon>
        <taxon>Metazoa</taxon>
        <taxon>Spiralia</taxon>
        <taxon>Lophotrochozoa</taxon>
        <taxon>Mollusca</taxon>
        <taxon>Gastropoda</taxon>
        <taxon>Heterobranchia</taxon>
        <taxon>Euthyneura</taxon>
        <taxon>Panpulmonata</taxon>
        <taxon>Hygrophila</taxon>
        <taxon>Lymnaeoidea</taxon>
        <taxon>Lymnaeidae</taxon>
        <taxon>Lymnaea</taxon>
    </lineage>
</organism>
<proteinExistence type="evidence at protein level"/>